<proteinExistence type="inferred from homology"/>
<sequence length="1098" mass="124231">MPSGLMRANTSTELESILDIVQSSGEIAVVFTSPSIGDLETITSETQRRQLRIAGIPRGGYTILPAIPLYDDELLQMCERYTAASEHEKVEIRNSLYMREYPLFAYSMRNQRALFHPADYVSRILQFCFHYVQVPDEDVLSLQDRSPFLHISPVKEICVHLRLIVRGTPAAPDESESPVPEQLHFHAESDAEKLAAERARALSIAASSGGASETEPLSLFTGVAPSALFQKGAVEEVDLDTEETIEDLTGEETVDAVHSFHSEYLTLSGFELVTKASIFYDHEGEGQRVVAVYIPGGVPKETCRAAAAVLELAVTKKNLRAATNGGLPPDTGIVGYYDYLTNPTQHKCRETEFSRRNWGLFSQSESLLKHLDKLYSQLAPTHHHLQRVAIPSQYQLCGTVFSTITVNRNFRTAVHTDKGDFRSGLGVLSVINGEFEGCHLAIKSLKKAFQLKVGDVLLFDTSLEHGNTEVVHPENHWQRTSIVCYLRTGLMSSVCEMERRKHLNRLILQQLLNTEIRHTTVNINEADSSLPPLFVPTRLASQLAPVQLAALGFIVERTNKQSGCVVAMTMGLGKTLVALTLCFSHLHLAPQADILILTPKPIISHWVDEKNKWGMYGLHFPHFVASDGLNSLEFEQQLLEYERQKNNEKPKAGHVFVINSEYLAGFLRRFRRFTPFLIIVDEGHRVAAKGNKLTESLDRLRCNLRVVLSGTPLQNDASELYRLVGWVNKGVSKVLPPKRFQELANSINQFVEGDDGAFYNAVMAQEYIQDWMRGFVFREMENDLPPLHDYLLVCGSSNVQREYEEKLGLTETAMTALRATEHRPHHLSTHPACYLAFISNCYQSMVSGWTVRAQSNTSRLRTTQLEEIDAMRLEQYAQMIENEQLDAFINVSGKMRVLVDIVLRVQARKEKLIIFSLYVGSQDLIHRTLTALRVCTFTVRGRDSQDRRRRAMHEFSENKDLTVLVLSTKIAAYGLEFTAANHVVLFDSWWNPQADAQAIARAYRRNQRKPVTVYRLISATENKFVLRSQTRKIALFKCIFHKRTTRQALPSELEDCSANETDNERRDFWAKLKATHLVGDTRALLNVYRYQESVRESQ</sequence>
<comment type="function">
    <text evidence="1">Dioxygenase that catalyzes the first step of DNA base J (beta-d-glucosyl-HOMedU) biosynthesis by converting thymine to 5-hydroxymethyluracil (HOMedU). DNA base J is a hypermodified thymidine residue found in the genome of kinetoplastid parasites, which is localized primarily to repetitive DNA, namely the telomeres, and is implicated in the regulation of antigenic variation. Probably also acts as a DNA helicase. Recognizes and binds specific regions of the genome, hydrolyzes ATP and allows the DNA base J de novo synthesis. Involved in initial synthesis of DNA base J, JBP1 being able to act via the basal level of DNA base J and propagate further synthesis. In contrast to JBP1, it does not specifically bind DNA base J, however it binds chromatin (By similarity).</text>
</comment>
<comment type="catalytic activity">
    <reaction evidence="1">
        <text>ATP + H2O = ADP + phosphate + H(+)</text>
        <dbReference type="Rhea" id="RHEA:13065"/>
        <dbReference type="ChEBI" id="CHEBI:15377"/>
        <dbReference type="ChEBI" id="CHEBI:15378"/>
        <dbReference type="ChEBI" id="CHEBI:30616"/>
        <dbReference type="ChEBI" id="CHEBI:43474"/>
        <dbReference type="ChEBI" id="CHEBI:456216"/>
        <dbReference type="EC" id="3.6.4.12"/>
    </reaction>
</comment>
<comment type="catalytic activity">
    <reaction evidence="1">
        <text>thymine + 2-oxoglutarate + O2 = 5-hydroxymethyluracil + succinate + CO2</text>
        <dbReference type="Rhea" id="RHEA:10316"/>
        <dbReference type="ChEBI" id="CHEBI:15379"/>
        <dbReference type="ChEBI" id="CHEBI:16526"/>
        <dbReference type="ChEBI" id="CHEBI:16810"/>
        <dbReference type="ChEBI" id="CHEBI:16964"/>
        <dbReference type="ChEBI" id="CHEBI:17821"/>
        <dbReference type="ChEBI" id="CHEBI:30031"/>
        <dbReference type="EC" id="1.14.11.6"/>
    </reaction>
</comment>
<comment type="cofactor">
    <cofactor evidence="2">
        <name>Fe(2+)</name>
        <dbReference type="ChEBI" id="CHEBI:29033"/>
    </cofactor>
    <text evidence="2">Binds 1 Fe(2+) ion per subunit.</text>
</comment>
<comment type="subcellular location">
    <subcellularLocation>
        <location evidence="1">Nucleus</location>
    </subcellularLocation>
</comment>
<comment type="similarity">
    <text evidence="5">In the C-terminal section; belongs to the SNF2/RAD54 helicase family.</text>
</comment>
<comment type="similarity">
    <text evidence="5">In the N-terminal section; belongs to the TET family. JBP2 subfamily.</text>
</comment>
<dbReference type="EC" id="3.6.4.12" evidence="1"/>
<dbReference type="EC" id="1.14.11.6" evidence="1"/>
<dbReference type="EMBL" id="FR798988">
    <property type="protein sequence ID" value="CAM37473.1"/>
    <property type="molecule type" value="Genomic_DNA"/>
</dbReference>
<dbReference type="RefSeq" id="XP_001562198.1">
    <property type="nucleotide sequence ID" value="XM_001562148.1"/>
</dbReference>
<dbReference type="SMR" id="A4H7G5"/>
<dbReference type="STRING" id="5660.A4H7G5"/>
<dbReference type="GeneID" id="5413800"/>
<dbReference type="KEGG" id="lbz:LBRM_14_0040"/>
<dbReference type="VEuPathDB" id="TriTrypDB:LbrM.14.0040"/>
<dbReference type="InParanoid" id="A4H7G5"/>
<dbReference type="OMA" id="HKCRETE"/>
<dbReference type="Proteomes" id="UP000007258">
    <property type="component" value="Chromosome 14"/>
</dbReference>
<dbReference type="GO" id="GO:0005634">
    <property type="term" value="C:nucleus"/>
    <property type="evidence" value="ECO:0007669"/>
    <property type="project" value="UniProtKB-SubCell"/>
</dbReference>
<dbReference type="GO" id="GO:0005524">
    <property type="term" value="F:ATP binding"/>
    <property type="evidence" value="ECO:0007669"/>
    <property type="project" value="UniProtKB-KW"/>
</dbReference>
<dbReference type="GO" id="GO:0016887">
    <property type="term" value="F:ATP hydrolysis activity"/>
    <property type="evidence" value="ECO:0007669"/>
    <property type="project" value="RHEA"/>
</dbReference>
<dbReference type="GO" id="GO:0003677">
    <property type="term" value="F:DNA binding"/>
    <property type="evidence" value="ECO:0007669"/>
    <property type="project" value="UniProtKB-KW"/>
</dbReference>
<dbReference type="GO" id="GO:0015616">
    <property type="term" value="F:DNA translocase activity"/>
    <property type="evidence" value="ECO:0007669"/>
    <property type="project" value="TreeGrafter"/>
</dbReference>
<dbReference type="GO" id="GO:0004386">
    <property type="term" value="F:helicase activity"/>
    <property type="evidence" value="ECO:0007669"/>
    <property type="project" value="UniProtKB-KW"/>
</dbReference>
<dbReference type="GO" id="GO:0046872">
    <property type="term" value="F:metal ion binding"/>
    <property type="evidence" value="ECO:0007669"/>
    <property type="project" value="UniProtKB-KW"/>
</dbReference>
<dbReference type="GO" id="GO:0050341">
    <property type="term" value="F:thymine dioxygenase activity"/>
    <property type="evidence" value="ECO:0007669"/>
    <property type="project" value="UniProtKB-EC"/>
</dbReference>
<dbReference type="GO" id="GO:0070580">
    <property type="term" value="P:base J metabolic process"/>
    <property type="evidence" value="ECO:0007669"/>
    <property type="project" value="UniProtKB-ARBA"/>
</dbReference>
<dbReference type="GO" id="GO:0000724">
    <property type="term" value="P:double-strand break repair via homologous recombination"/>
    <property type="evidence" value="ECO:0007669"/>
    <property type="project" value="TreeGrafter"/>
</dbReference>
<dbReference type="GO" id="GO:0007131">
    <property type="term" value="P:reciprocal meiotic recombination"/>
    <property type="evidence" value="ECO:0007669"/>
    <property type="project" value="TreeGrafter"/>
</dbReference>
<dbReference type="CDD" id="cd17919">
    <property type="entry name" value="DEXHc_Snf"/>
    <property type="match status" value="1"/>
</dbReference>
<dbReference type="CDD" id="cd18793">
    <property type="entry name" value="SF2_C_SNF"/>
    <property type="match status" value="1"/>
</dbReference>
<dbReference type="FunFam" id="3.40.50.10810:FF:000072">
    <property type="entry name" value="Bifunctional helicase and thymine dioxygenase JBP2"/>
    <property type="match status" value="1"/>
</dbReference>
<dbReference type="FunFam" id="3.60.130.30:FF:000001">
    <property type="entry name" value="Bifunctional helicase and thymine dioxygenase JBP2"/>
    <property type="match status" value="1"/>
</dbReference>
<dbReference type="Gene3D" id="3.60.130.30">
    <property type="match status" value="1"/>
</dbReference>
<dbReference type="Gene3D" id="3.40.50.300">
    <property type="entry name" value="P-loop containing nucleotide triphosphate hydrolases"/>
    <property type="match status" value="1"/>
</dbReference>
<dbReference type="Gene3D" id="3.40.50.10810">
    <property type="entry name" value="Tandem AAA-ATPase domain"/>
    <property type="match status" value="1"/>
</dbReference>
<dbReference type="InterPro" id="IPR024779">
    <property type="entry name" value="2OGFeDO_JBP1/TET_oxygenase_dom"/>
</dbReference>
<dbReference type="InterPro" id="IPR014001">
    <property type="entry name" value="Helicase_ATP-bd"/>
</dbReference>
<dbReference type="InterPro" id="IPR001650">
    <property type="entry name" value="Helicase_C-like"/>
</dbReference>
<dbReference type="InterPro" id="IPR027417">
    <property type="entry name" value="P-loop_NTPase"/>
</dbReference>
<dbReference type="InterPro" id="IPR038718">
    <property type="entry name" value="SNF2-like_sf"/>
</dbReference>
<dbReference type="InterPro" id="IPR049730">
    <property type="entry name" value="SNF2/RAD54-like_C"/>
</dbReference>
<dbReference type="InterPro" id="IPR000330">
    <property type="entry name" value="SNF2_N"/>
</dbReference>
<dbReference type="InterPro" id="IPR050496">
    <property type="entry name" value="SNF2_RAD54_helicase_repair"/>
</dbReference>
<dbReference type="PANTHER" id="PTHR45629:SF7">
    <property type="entry name" value="DNA EXCISION REPAIR PROTEIN ERCC-6-RELATED"/>
    <property type="match status" value="1"/>
</dbReference>
<dbReference type="PANTHER" id="PTHR45629">
    <property type="entry name" value="SNF2/RAD54 FAMILY MEMBER"/>
    <property type="match status" value="1"/>
</dbReference>
<dbReference type="Pfam" id="PF00271">
    <property type="entry name" value="Helicase_C"/>
    <property type="match status" value="1"/>
</dbReference>
<dbReference type="Pfam" id="PF00176">
    <property type="entry name" value="SNF2-rel_dom"/>
    <property type="match status" value="1"/>
</dbReference>
<dbReference type="Pfam" id="PF12851">
    <property type="entry name" value="Tet_JBP"/>
    <property type="match status" value="1"/>
</dbReference>
<dbReference type="SMART" id="SM00487">
    <property type="entry name" value="DEXDc"/>
    <property type="match status" value="1"/>
</dbReference>
<dbReference type="SMART" id="SM00490">
    <property type="entry name" value="HELICc"/>
    <property type="match status" value="1"/>
</dbReference>
<dbReference type="SUPFAM" id="SSF52540">
    <property type="entry name" value="P-loop containing nucleoside triphosphate hydrolases"/>
    <property type="match status" value="2"/>
</dbReference>
<dbReference type="PROSITE" id="PS51192">
    <property type="entry name" value="HELICASE_ATP_BIND_1"/>
    <property type="match status" value="1"/>
</dbReference>
<dbReference type="PROSITE" id="PS51194">
    <property type="entry name" value="HELICASE_CTER"/>
    <property type="match status" value="1"/>
</dbReference>
<organism>
    <name type="scientific">Leishmania braziliensis</name>
    <dbReference type="NCBI Taxonomy" id="5660"/>
    <lineage>
        <taxon>Eukaryota</taxon>
        <taxon>Discoba</taxon>
        <taxon>Euglenozoa</taxon>
        <taxon>Kinetoplastea</taxon>
        <taxon>Metakinetoplastina</taxon>
        <taxon>Trypanosomatida</taxon>
        <taxon>Trypanosomatidae</taxon>
        <taxon>Leishmaniinae</taxon>
        <taxon>Leishmania</taxon>
        <taxon>Leishmania braziliensis species complex</taxon>
    </lineage>
</organism>
<evidence type="ECO:0000250" key="1">
    <source>
        <dbReference type="UniProtKB" id="B6EU02"/>
    </source>
</evidence>
<evidence type="ECO:0000250" key="2">
    <source>
        <dbReference type="UniProtKB" id="Q6N021"/>
    </source>
</evidence>
<evidence type="ECO:0000255" key="3">
    <source>
        <dbReference type="PROSITE-ProRule" id="PRU00541"/>
    </source>
</evidence>
<evidence type="ECO:0000255" key="4">
    <source>
        <dbReference type="PROSITE-ProRule" id="PRU00542"/>
    </source>
</evidence>
<evidence type="ECO:0000305" key="5"/>
<accession>A4H7G5</accession>
<protein>
    <recommendedName>
        <fullName>Bifunctional helicase and thymine dioxygenase JBP2</fullName>
    </recommendedName>
    <alternativeName>
        <fullName>J-binding protein 2</fullName>
    </alternativeName>
    <domain>
        <recommendedName>
            <fullName>Probable DNA helicase JBP2</fullName>
            <ecNumber evidence="1">3.6.4.12</ecNumber>
        </recommendedName>
    </domain>
    <domain>
        <recommendedName>
            <fullName>Thymine dioxygenase JBP2</fullName>
            <ecNumber evidence="1">1.14.11.6</ecNumber>
        </recommendedName>
    </domain>
</protein>
<reference key="1">
    <citation type="journal article" date="2007" name="Nat. Genet.">
        <title>Comparative genomic analysis of three Leishmania species that cause diverse human disease.</title>
        <authorList>
            <person name="Peacock C.S."/>
            <person name="Seeger K."/>
            <person name="Harris D."/>
            <person name="Murphy L."/>
            <person name="Ruiz J.C."/>
            <person name="Quail M.A."/>
            <person name="Peters N."/>
            <person name="Adlem E."/>
            <person name="Tivey A."/>
            <person name="Aslett M."/>
            <person name="Kerhornou A."/>
            <person name="Ivens A."/>
            <person name="Fraser A."/>
            <person name="Rajandream M.-A."/>
            <person name="Carver T."/>
            <person name="Norbertczak H."/>
            <person name="Chillingworth T."/>
            <person name="Hance Z."/>
            <person name="Jagels K."/>
            <person name="Moule S."/>
            <person name="Ormond D."/>
            <person name="Rutter S."/>
            <person name="Sqaures R."/>
            <person name="Whitehead S."/>
            <person name="Rabbinowitsch E."/>
            <person name="Arrowsmith C."/>
            <person name="White B."/>
            <person name="Thurston S."/>
            <person name="Bringaud F."/>
            <person name="Baldauf S.L."/>
            <person name="Faulconbridge A."/>
            <person name="Jeffares D."/>
            <person name="Depledge D.P."/>
            <person name="Oyola S.O."/>
            <person name="Hilley J.D."/>
            <person name="Brito L.O."/>
            <person name="Tosi L.R.O."/>
            <person name="Barrell B."/>
            <person name="Cruz A.K."/>
            <person name="Mottram J.C."/>
            <person name="Smith D.F."/>
            <person name="Berriman M."/>
        </authorList>
    </citation>
    <scope>NUCLEOTIDE SEQUENCE [LARGE SCALE GENOMIC DNA]</scope>
    <source>
        <strain>MHOM/BR/75/M2904</strain>
    </source>
</reference>
<feature type="chain" id="PRO_0000377558" description="Bifunctional helicase and thymine dioxygenase JBP2">
    <location>
        <begin position="1"/>
        <end position="1098"/>
    </location>
</feature>
<feature type="domain" description="Helicase ATP-binding" evidence="3">
    <location>
        <begin position="555"/>
        <end position="730"/>
    </location>
</feature>
<feature type="domain" description="Helicase C-terminal" evidence="4">
    <location>
        <begin position="897"/>
        <end position="1057"/>
    </location>
</feature>
<feature type="region of interest" description="Thymine dioxygenase">
    <location>
        <begin position="1"/>
        <end position="540"/>
    </location>
</feature>
<feature type="region of interest" description="DNA Helicase">
    <location>
        <begin position="541"/>
        <end position="1098"/>
    </location>
</feature>
<feature type="short sequence motif" description="DEAH box">
    <location>
        <begin position="681"/>
        <end position="684"/>
    </location>
</feature>
<feature type="binding site" evidence="2">
    <location>
        <position position="415"/>
    </location>
    <ligand>
        <name>Fe cation</name>
        <dbReference type="ChEBI" id="CHEBI:24875"/>
        <note>catalytic; for thymine dioxygenase activity</note>
    </ligand>
</feature>
<feature type="binding site" evidence="2">
    <location>
        <position position="417"/>
    </location>
    <ligand>
        <name>Fe cation</name>
        <dbReference type="ChEBI" id="CHEBI:24875"/>
        <note>catalytic; for thymine dioxygenase activity</note>
    </ligand>
</feature>
<feature type="binding site" evidence="2">
    <location>
        <position position="465"/>
    </location>
    <ligand>
        <name>Fe cation</name>
        <dbReference type="ChEBI" id="CHEBI:24875"/>
        <note>catalytic; for thymine dioxygenase activity</note>
    </ligand>
</feature>
<feature type="binding site" evidence="2">
    <location>
        <position position="479"/>
    </location>
    <ligand>
        <name>2-oxoglutarate</name>
        <dbReference type="ChEBI" id="CHEBI:16810"/>
    </ligand>
</feature>
<feature type="binding site" evidence="3">
    <location>
        <begin position="568"/>
        <end position="575"/>
    </location>
    <ligand>
        <name>ATP</name>
        <dbReference type="ChEBI" id="CHEBI:30616"/>
    </ligand>
</feature>
<keyword id="KW-0067">ATP-binding</keyword>
<keyword id="KW-0223">Dioxygenase</keyword>
<keyword id="KW-0238">DNA-binding</keyword>
<keyword id="KW-0347">Helicase</keyword>
<keyword id="KW-0378">Hydrolase</keyword>
<keyword id="KW-0408">Iron</keyword>
<keyword id="KW-0479">Metal-binding</keyword>
<keyword id="KW-0547">Nucleotide-binding</keyword>
<keyword id="KW-0539">Nucleus</keyword>
<keyword id="KW-0560">Oxidoreductase</keyword>
<keyword id="KW-1185">Reference proteome</keyword>
<name>JBP2_LEIBR</name>
<gene>
    <name type="primary">JBP2</name>
    <name type="ORF">LbrM14_V2.0040</name>
    <name type="ORF">LbrM_14_0040</name>
</gene>